<evidence type="ECO:0000255" key="1">
    <source>
        <dbReference type="HAMAP-Rule" id="MF_01815"/>
    </source>
</evidence>
<accession>A6VQV2</accession>
<proteinExistence type="inferred from homology"/>
<name>FABH_ACTSZ</name>
<comment type="function">
    <text evidence="1">Catalyzes the condensation reaction of fatty acid synthesis by the addition to an acyl acceptor of two carbons from malonyl-ACP. Catalyzes the first condensation reaction which initiates fatty acid synthesis and may therefore play a role in governing the total rate of fatty acid production. Possesses both acetoacetyl-ACP synthase and acetyl transacylase activities. Its substrate specificity determines the biosynthesis of branched-chain and/or straight-chain of fatty acids.</text>
</comment>
<comment type="catalytic activity">
    <reaction evidence="1">
        <text>malonyl-[ACP] + acetyl-CoA + H(+) = 3-oxobutanoyl-[ACP] + CO2 + CoA</text>
        <dbReference type="Rhea" id="RHEA:12080"/>
        <dbReference type="Rhea" id="RHEA-COMP:9623"/>
        <dbReference type="Rhea" id="RHEA-COMP:9625"/>
        <dbReference type="ChEBI" id="CHEBI:15378"/>
        <dbReference type="ChEBI" id="CHEBI:16526"/>
        <dbReference type="ChEBI" id="CHEBI:57287"/>
        <dbReference type="ChEBI" id="CHEBI:57288"/>
        <dbReference type="ChEBI" id="CHEBI:78449"/>
        <dbReference type="ChEBI" id="CHEBI:78450"/>
        <dbReference type="EC" id="2.3.1.180"/>
    </reaction>
</comment>
<comment type="pathway">
    <text evidence="1">Lipid metabolism; fatty acid biosynthesis.</text>
</comment>
<comment type="subunit">
    <text evidence="1">Homodimer.</text>
</comment>
<comment type="subcellular location">
    <subcellularLocation>
        <location evidence="1">Cytoplasm</location>
    </subcellularLocation>
</comment>
<comment type="domain">
    <text evidence="1">The last Arg residue of the ACP-binding site is essential for the weak association between ACP/AcpP and FabH.</text>
</comment>
<comment type="similarity">
    <text evidence="1">Belongs to the thiolase-like superfamily. FabH family.</text>
</comment>
<feature type="chain" id="PRO_1000073679" description="Beta-ketoacyl-[acyl-carrier-protein] synthase III">
    <location>
        <begin position="1"/>
        <end position="316"/>
    </location>
</feature>
<feature type="region of interest" description="ACP-binding" evidence="1">
    <location>
        <begin position="244"/>
        <end position="248"/>
    </location>
</feature>
<feature type="active site" evidence="1">
    <location>
        <position position="112"/>
    </location>
</feature>
<feature type="active site" evidence="1">
    <location>
        <position position="243"/>
    </location>
</feature>
<feature type="active site" evidence="1">
    <location>
        <position position="273"/>
    </location>
</feature>
<keyword id="KW-0012">Acyltransferase</keyword>
<keyword id="KW-0963">Cytoplasm</keyword>
<keyword id="KW-0275">Fatty acid biosynthesis</keyword>
<keyword id="KW-0276">Fatty acid metabolism</keyword>
<keyword id="KW-0444">Lipid biosynthesis</keyword>
<keyword id="KW-0443">Lipid metabolism</keyword>
<keyword id="KW-0511">Multifunctional enzyme</keyword>
<keyword id="KW-1185">Reference proteome</keyword>
<keyword id="KW-0808">Transferase</keyword>
<protein>
    <recommendedName>
        <fullName evidence="1">Beta-ketoacyl-[acyl-carrier-protein] synthase III</fullName>
        <shortName evidence="1">Beta-ketoacyl-ACP synthase III</shortName>
        <shortName evidence="1">KAS III</shortName>
        <ecNumber evidence="1">2.3.1.180</ecNumber>
    </recommendedName>
    <alternativeName>
        <fullName evidence="1">3-oxoacyl-[acyl-carrier-protein] synthase 3</fullName>
    </alternativeName>
    <alternativeName>
        <fullName evidence="1">3-oxoacyl-[acyl-carrier-protein] synthase III</fullName>
    </alternativeName>
</protein>
<gene>
    <name evidence="1" type="primary">fabH</name>
    <name type="ordered locus">Asuc_2003</name>
</gene>
<reference key="1">
    <citation type="journal article" date="2010" name="BMC Genomics">
        <title>A genomic perspective on the potential of Actinobacillus succinogenes for industrial succinate production.</title>
        <authorList>
            <person name="McKinlay J.B."/>
            <person name="Laivenieks M."/>
            <person name="Schindler B.D."/>
            <person name="McKinlay A.A."/>
            <person name="Siddaramappa S."/>
            <person name="Challacombe J.F."/>
            <person name="Lowry S.R."/>
            <person name="Clum A."/>
            <person name="Lapidus A.L."/>
            <person name="Burkhart K.B."/>
            <person name="Harkins V."/>
            <person name="Vieille C."/>
        </authorList>
    </citation>
    <scope>NUCLEOTIDE SEQUENCE [LARGE SCALE GENOMIC DNA]</scope>
    <source>
        <strain>ATCC 55618 / DSM 22257 / CCUG 43843 / 130Z</strain>
    </source>
</reference>
<sequence>MNSRILATGSYLPTRVRTNADLEKMVETSDEWIVTRSGIRERRLAAEHETVATMGFEAAKKALETAKIDPNEIELIIVGTTSNSHAYPSAACQIQGMLNINDAISFDLAAACTGFVYALSVADQFIRAGTVKKALVIGSDLNSRNLDETDRSTVILFGDGAGAIVLEASEEEGIISTHLHAVADKNDVLVLPHAQRNDEKSGYIMMQGNETFKLAVRELSNVVEETLVANNLDKKDIDWLVPHQANLRIIAATVKKLDMTLEQAVVTLDKYANTSAASVPISLDEAVRDGRIRRGQLLLLEAFGGGWTWGSALVRF</sequence>
<organism>
    <name type="scientific">Actinobacillus succinogenes (strain ATCC 55618 / DSM 22257 / CCUG 43843 / 130Z)</name>
    <dbReference type="NCBI Taxonomy" id="339671"/>
    <lineage>
        <taxon>Bacteria</taxon>
        <taxon>Pseudomonadati</taxon>
        <taxon>Pseudomonadota</taxon>
        <taxon>Gammaproteobacteria</taxon>
        <taxon>Pasteurellales</taxon>
        <taxon>Pasteurellaceae</taxon>
        <taxon>Actinobacillus</taxon>
    </lineage>
</organism>
<dbReference type="EC" id="2.3.1.180" evidence="1"/>
<dbReference type="EMBL" id="CP000746">
    <property type="protein sequence ID" value="ABR75349.1"/>
    <property type="molecule type" value="Genomic_DNA"/>
</dbReference>
<dbReference type="RefSeq" id="WP_012073726.1">
    <property type="nucleotide sequence ID" value="NC_009655.1"/>
</dbReference>
<dbReference type="SMR" id="A6VQV2"/>
<dbReference type="STRING" id="339671.Asuc_2003"/>
<dbReference type="KEGG" id="asu:Asuc_2003"/>
<dbReference type="eggNOG" id="COG0332">
    <property type="taxonomic scope" value="Bacteria"/>
</dbReference>
<dbReference type="HOGENOM" id="CLU_039592_3_1_6"/>
<dbReference type="OrthoDB" id="9815506at2"/>
<dbReference type="UniPathway" id="UPA00094"/>
<dbReference type="Proteomes" id="UP000001114">
    <property type="component" value="Chromosome"/>
</dbReference>
<dbReference type="GO" id="GO:0005737">
    <property type="term" value="C:cytoplasm"/>
    <property type="evidence" value="ECO:0007669"/>
    <property type="project" value="UniProtKB-SubCell"/>
</dbReference>
<dbReference type="GO" id="GO:0004315">
    <property type="term" value="F:3-oxoacyl-[acyl-carrier-protein] synthase activity"/>
    <property type="evidence" value="ECO:0007669"/>
    <property type="project" value="InterPro"/>
</dbReference>
<dbReference type="GO" id="GO:0033818">
    <property type="term" value="F:beta-ketoacyl-acyl-carrier-protein synthase III activity"/>
    <property type="evidence" value="ECO:0007669"/>
    <property type="project" value="UniProtKB-UniRule"/>
</dbReference>
<dbReference type="GO" id="GO:0006633">
    <property type="term" value="P:fatty acid biosynthetic process"/>
    <property type="evidence" value="ECO:0007669"/>
    <property type="project" value="UniProtKB-UniRule"/>
</dbReference>
<dbReference type="GO" id="GO:0044550">
    <property type="term" value="P:secondary metabolite biosynthetic process"/>
    <property type="evidence" value="ECO:0007669"/>
    <property type="project" value="TreeGrafter"/>
</dbReference>
<dbReference type="CDD" id="cd00830">
    <property type="entry name" value="KAS_III"/>
    <property type="match status" value="1"/>
</dbReference>
<dbReference type="FunFam" id="3.40.47.10:FF:000004">
    <property type="entry name" value="3-oxoacyl-[acyl-carrier-protein] synthase 3"/>
    <property type="match status" value="1"/>
</dbReference>
<dbReference type="Gene3D" id="3.40.47.10">
    <property type="match status" value="2"/>
</dbReference>
<dbReference type="HAMAP" id="MF_01815">
    <property type="entry name" value="FabH"/>
    <property type="match status" value="1"/>
</dbReference>
<dbReference type="InterPro" id="IPR013747">
    <property type="entry name" value="ACP_syn_III_C"/>
</dbReference>
<dbReference type="InterPro" id="IPR013751">
    <property type="entry name" value="ACP_syn_III_N"/>
</dbReference>
<dbReference type="InterPro" id="IPR004655">
    <property type="entry name" value="FabH"/>
</dbReference>
<dbReference type="InterPro" id="IPR016039">
    <property type="entry name" value="Thiolase-like"/>
</dbReference>
<dbReference type="NCBIfam" id="TIGR00747">
    <property type="entry name" value="fabH"/>
    <property type="match status" value="1"/>
</dbReference>
<dbReference type="NCBIfam" id="NF006829">
    <property type="entry name" value="PRK09352.1"/>
    <property type="match status" value="1"/>
</dbReference>
<dbReference type="PANTHER" id="PTHR34069">
    <property type="entry name" value="3-OXOACYL-[ACYL-CARRIER-PROTEIN] SYNTHASE 3"/>
    <property type="match status" value="1"/>
</dbReference>
<dbReference type="PANTHER" id="PTHR34069:SF2">
    <property type="entry name" value="BETA-KETOACYL-[ACYL-CARRIER-PROTEIN] SYNTHASE III"/>
    <property type="match status" value="1"/>
</dbReference>
<dbReference type="Pfam" id="PF08545">
    <property type="entry name" value="ACP_syn_III"/>
    <property type="match status" value="1"/>
</dbReference>
<dbReference type="Pfam" id="PF08541">
    <property type="entry name" value="ACP_syn_III_C"/>
    <property type="match status" value="1"/>
</dbReference>
<dbReference type="SUPFAM" id="SSF53901">
    <property type="entry name" value="Thiolase-like"/>
    <property type="match status" value="1"/>
</dbReference>